<name>SUMO2_PIG</name>
<protein>
    <recommendedName>
        <fullName>Small ubiquitin-related modifier 2</fullName>
        <shortName>SUMO-2</shortName>
    </recommendedName>
    <alternativeName>
        <fullName>MIF2 suppressor</fullName>
    </alternativeName>
    <alternativeName>
        <fullName>SMT3 homolog 2</fullName>
    </alternativeName>
    <alternativeName>
        <fullName>Sentrin-2</fullName>
    </alternativeName>
    <alternativeName>
        <fullName>Ubiquitin-like protein SMT3A</fullName>
        <shortName>Smt3A</shortName>
    </alternativeName>
</protein>
<feature type="chain" id="PRO_0000035953" description="Small ubiquitin-related modifier 2">
    <location>
        <begin position="1"/>
        <end position="93"/>
    </location>
</feature>
<feature type="propeptide" id="PRO_0000035954" evidence="1">
    <location>
        <begin position="94"/>
        <end position="95"/>
    </location>
</feature>
<feature type="domain" description="Ubiquitin-like" evidence="4">
    <location>
        <begin position="16"/>
        <end position="95"/>
    </location>
</feature>
<feature type="modified residue" description="N6-acetyllysine; alternate" evidence="2">
    <location>
        <position position="11"/>
    </location>
</feature>
<feature type="cross-link" description="Peptide (Met-Gly) (interchain with G-Cter in ubiquitin)" evidence="1">
    <location>
        <position position="1"/>
    </location>
</feature>
<feature type="cross-link" description="Glycyl lysine isopeptide (Lys-Gly) (interchain with G-Cter in SUMO2)" evidence="2">
    <location>
        <position position="5"/>
    </location>
</feature>
<feature type="cross-link" description="Glycyl lysine isopeptide (Lys-Gly) (interchain with G-Cter in SUMO2)" evidence="2">
    <location>
        <position position="7"/>
    </location>
</feature>
<feature type="cross-link" description="Glycyl lysine isopeptide (Lys-Gly) (interchain with G-Cter in SUMO); alternate" evidence="1">
    <location>
        <position position="11"/>
    </location>
</feature>
<feature type="cross-link" description="Glycyl lysine isopeptide (Lys-Gly) (interchain with G-Cter in SUMO1); alternate" evidence="2">
    <location>
        <position position="11"/>
    </location>
</feature>
<feature type="cross-link" description="Glycyl lysine isopeptide (Lys-Gly) (interchain with G-Cter in SUMO2); alternate" evidence="2">
    <location>
        <position position="11"/>
    </location>
</feature>
<feature type="cross-link" description="Glycyl lysine isopeptide (Lys-Gly) (interchain with G-Cter in ubiquitin); alternate" evidence="2">
    <location>
        <position position="11"/>
    </location>
</feature>
<feature type="cross-link" description="Glycyl lysine isopeptide (Lys-Gly) (interchain with G-Cter in SUMO2)" evidence="2">
    <location>
        <position position="21"/>
    </location>
</feature>
<feature type="cross-link" description="Glycyl lysine isopeptide (Gly-Lys) (interchain with K-? in acceptor proteins)" evidence="4">
    <location>
        <position position="93"/>
    </location>
</feature>
<comment type="function">
    <text evidence="2">Ubiquitin-like protein that can be covalently attached to proteins as a monomer or as a lysine-linked polymer. Covalent attachment via an isopeptide bond to its substrates requires prior activation by the E1 complex SAE1-SAE2 and linkage to the E2 enzyme UBE2I, and can be promoted by an E3 ligase such as PIAS1-4, RANBP2 or CBX4. This post-translational modification on lysine residues of proteins plays a crucial role in a number of cellular processes such as nuclear transport, DNA replication and repair, mitosis and signal transduction. Polymeric SUMO2 chains are also susceptible to polyubiquitination which functions as a signal for proteasomal degradation of modified proteins. Plays a role in the regulation of sumoylation status of SETX (By similarity).</text>
</comment>
<comment type="subunit">
    <text evidence="2 3">Interacts with SAE2 and UBE2I. Interacts with ZNF451. Identified in a complex with ZNF451 and UBE2I/UBC9, where one ZNF451 interacts with one UBE2I/UBC9 and two SUMO2 chains, one bound to the UBE2I/UBC9 active site and the other to another region of the same UBE2I/UBC9 molecule. Covalently attached to a number of proteins. Interacts with PELP1. Interacts with USP25; the interaction sumoylates USP25. Interacts with SIMC1, CASP8AP2, RNF111 and SOBP (via SIM domains). Interacts with MTA1 (By similarity). Interacts with HINT1 (By similarity). Interacts with GCNA (via SIM domains); this interaction allows the GCNA recruitment to DPCs sites (By similarity).</text>
</comment>
<comment type="subcellular location">
    <subcellularLocation>
        <location evidence="1">Nucleus</location>
    </subcellularLocation>
    <subcellularLocation>
        <location evidence="1">Nucleus</location>
        <location evidence="1">PML body</location>
    </subcellularLocation>
</comment>
<comment type="PTM">
    <text evidence="1">Polymeric chains can be formed through Lys-11 cross-linking. Polymeric SUMO2 chains undergo 'Lys-6'-, 'Lys-11'-, 'Lys-48'- and 'Lys-63'-linked polyubiquitination by RNF4 (By similarity).</text>
</comment>
<comment type="PTM">
    <text evidence="1">Cleavage of precursor form by SENP1 or SENP2 is necessary for function.</text>
</comment>
<comment type="PTM">
    <text evidence="1">Monoubiquitinated N-terminally by UBE2W, which primes it for RNF4-dependent polyubiquitination by the UBE2V1-UBE2N heterodimer.</text>
</comment>
<comment type="similarity">
    <text evidence="5">Belongs to the ubiquitin family. SUMO subfamily.</text>
</comment>
<proteinExistence type="inferred from homology"/>
<evidence type="ECO:0000250" key="1"/>
<evidence type="ECO:0000250" key="2">
    <source>
        <dbReference type="UniProtKB" id="P61956"/>
    </source>
</evidence>
<evidence type="ECO:0000250" key="3">
    <source>
        <dbReference type="UniProtKB" id="P61957"/>
    </source>
</evidence>
<evidence type="ECO:0000255" key="4">
    <source>
        <dbReference type="PROSITE-ProRule" id="PRU00214"/>
    </source>
</evidence>
<evidence type="ECO:0000305" key="5"/>
<gene>
    <name type="primary">SUMO2</name>
    <name type="synonym">SMT3A</name>
    <name type="synonym">SMT3H2</name>
</gene>
<sequence>MADEKPKEGVKTENNDHINLKVAGQDGSVVQFKIKRHTPLSKLMKAYCERQGLSMRQIRFRFDGQPINETDTPAQLEMEDEDTIDVFQQQTGGVY</sequence>
<organism>
    <name type="scientific">Sus scrofa</name>
    <name type="common">Pig</name>
    <dbReference type="NCBI Taxonomy" id="9823"/>
    <lineage>
        <taxon>Eukaryota</taxon>
        <taxon>Metazoa</taxon>
        <taxon>Chordata</taxon>
        <taxon>Craniata</taxon>
        <taxon>Vertebrata</taxon>
        <taxon>Euteleostomi</taxon>
        <taxon>Mammalia</taxon>
        <taxon>Eutheria</taxon>
        <taxon>Laurasiatheria</taxon>
        <taxon>Artiodactyla</taxon>
        <taxon>Suina</taxon>
        <taxon>Suidae</taxon>
        <taxon>Sus</taxon>
    </lineage>
</organism>
<accession>P61958</accession>
<accession>A7WLH9</accession>
<accession>P55855</accession>
<keyword id="KW-0007">Acetylation</keyword>
<keyword id="KW-1017">Isopeptide bond</keyword>
<keyword id="KW-0539">Nucleus</keyword>
<keyword id="KW-1185">Reference proteome</keyword>
<keyword id="KW-0832">Ubl conjugation</keyword>
<keyword id="KW-0833">Ubl conjugation pathway</keyword>
<reference key="1">
    <citation type="submission" date="2001-12" db="EMBL/GenBank/DDBJ databases">
        <authorList>
            <person name="Mannen H."/>
            <person name="Li S.S.-L."/>
        </authorList>
    </citation>
    <scope>NUCLEOTIDE SEQUENCE [MRNA]</scope>
</reference>
<reference key="2">
    <citation type="submission" date="2006-08" db="EMBL/GenBank/DDBJ databases">
        <title>Molecular cloning and expression analysis of porcine SUMO genes.</title>
        <authorList>
            <person name="Chun T."/>
            <person name="Lee J.Y."/>
        </authorList>
    </citation>
    <scope>NUCLEOTIDE SEQUENCE [MRNA]</scope>
</reference>
<dbReference type="EMBL" id="L77617">
    <property type="protein sequence ID" value="AAL40163.1"/>
    <property type="molecule type" value="mRNA"/>
</dbReference>
<dbReference type="EMBL" id="AM397626">
    <property type="protein sequence ID" value="CAL37097.1"/>
    <property type="molecule type" value="mRNA"/>
</dbReference>
<dbReference type="RefSeq" id="NP_999149.1">
    <property type="nucleotide sequence ID" value="NM_213984.2"/>
</dbReference>
<dbReference type="BMRB" id="P61958"/>
<dbReference type="SMR" id="P61958"/>
<dbReference type="FunCoup" id="P61958">
    <property type="interactions" value="2424"/>
</dbReference>
<dbReference type="STRING" id="9823.ENSSSCP00000018235"/>
<dbReference type="PaxDb" id="9823-ENSSSCP00000018235"/>
<dbReference type="PeptideAtlas" id="P61958"/>
<dbReference type="Ensembl" id="ENSSSCT00000018737.5">
    <property type="protein sequence ID" value="ENSSSCP00000018235.2"/>
    <property type="gene ID" value="ENSSSCG00000017212.5"/>
</dbReference>
<dbReference type="Ensembl" id="ENSSSCT00025040758.1">
    <property type="protein sequence ID" value="ENSSSCP00025017359.1"/>
    <property type="gene ID" value="ENSSSCG00025029926.1"/>
</dbReference>
<dbReference type="Ensembl" id="ENSSSCT00030003923.1">
    <property type="protein sequence ID" value="ENSSSCP00030001552.1"/>
    <property type="gene ID" value="ENSSSCG00030003031.1"/>
</dbReference>
<dbReference type="Ensembl" id="ENSSSCT00035054140.1">
    <property type="protein sequence ID" value="ENSSSCP00035021764.1"/>
    <property type="gene ID" value="ENSSSCG00035040753.1"/>
</dbReference>
<dbReference type="Ensembl" id="ENSSSCT00040082896.1">
    <property type="protein sequence ID" value="ENSSSCP00040036107.1"/>
    <property type="gene ID" value="ENSSSCG00040060833.1"/>
</dbReference>
<dbReference type="Ensembl" id="ENSSSCT00045063339.1">
    <property type="protein sequence ID" value="ENSSSCP00045044664.1"/>
    <property type="gene ID" value="ENSSSCG00045036771.1"/>
</dbReference>
<dbReference type="Ensembl" id="ENSSSCT00050108846.1">
    <property type="protein sequence ID" value="ENSSSCP00050048373.1"/>
    <property type="gene ID" value="ENSSSCG00050078886.1"/>
</dbReference>
<dbReference type="Ensembl" id="ENSSSCT00055038226.1">
    <property type="protein sequence ID" value="ENSSSCP00055030367.1"/>
    <property type="gene ID" value="ENSSSCG00055019508.1"/>
</dbReference>
<dbReference type="Ensembl" id="ENSSSCT00060065631.1">
    <property type="protein sequence ID" value="ENSSSCP00060028094.1"/>
    <property type="gene ID" value="ENSSSCG00060048329.1"/>
</dbReference>
<dbReference type="Ensembl" id="ENSSSCT00065099367.1">
    <property type="protein sequence ID" value="ENSSSCP00065043605.1"/>
    <property type="gene ID" value="ENSSSCG00065072298.1"/>
</dbReference>
<dbReference type="Ensembl" id="ENSSSCT00085011109">
    <property type="protein sequence ID" value="ENSSSCP00085007893"/>
    <property type="gene ID" value="ENSSSCG00085005999"/>
</dbReference>
<dbReference type="Ensembl" id="ENSSSCT00090016700">
    <property type="protein sequence ID" value="ENSSSCP00090010721"/>
    <property type="gene ID" value="ENSSSCG00090009297"/>
</dbReference>
<dbReference type="Ensembl" id="ENSSSCT00105031883">
    <property type="protein sequence ID" value="ENSSSCP00105022416"/>
    <property type="gene ID" value="ENSSSCG00105016487"/>
</dbReference>
<dbReference type="Ensembl" id="ENSSSCT00110062641">
    <property type="protein sequence ID" value="ENSSSCP00110043889"/>
    <property type="gene ID" value="ENSSSCG00110032811"/>
</dbReference>
<dbReference type="Ensembl" id="ENSSSCT00115033674">
    <property type="protein sequence ID" value="ENSSSCP00115031966"/>
    <property type="gene ID" value="ENSSSCG00115019043"/>
</dbReference>
<dbReference type="Ensembl" id="ENSSSCT00130065177">
    <property type="protein sequence ID" value="ENSSSCP00130046758"/>
    <property type="gene ID" value="ENSSSCG00130033319"/>
</dbReference>
<dbReference type="GeneID" id="397044"/>
<dbReference type="KEGG" id="ssc:397044"/>
<dbReference type="CTD" id="6613"/>
<dbReference type="eggNOG" id="KOG1769">
    <property type="taxonomic scope" value="Eukaryota"/>
</dbReference>
<dbReference type="GeneTree" id="ENSGT00950000182895"/>
<dbReference type="HOGENOM" id="CLU_148322_2_1_1"/>
<dbReference type="InParanoid" id="P61958"/>
<dbReference type="OMA" id="MKIYCAR"/>
<dbReference type="OrthoDB" id="9925208at2759"/>
<dbReference type="TreeFam" id="TF315116"/>
<dbReference type="Reactome" id="R-SSC-196791">
    <property type="pathway name" value="Vitamin D (calciferol) metabolism"/>
</dbReference>
<dbReference type="Reactome" id="R-SSC-3065679">
    <property type="pathway name" value="SUMO is proteolytically processed"/>
</dbReference>
<dbReference type="Reactome" id="R-SSC-3108214">
    <property type="pathway name" value="SUMOylation of DNA damage response and repair proteins"/>
</dbReference>
<dbReference type="Reactome" id="R-SSC-3232118">
    <property type="pathway name" value="SUMOylation of transcription factors"/>
</dbReference>
<dbReference type="Reactome" id="R-SSC-3899300">
    <property type="pathway name" value="SUMOylation of transcription cofactors"/>
</dbReference>
<dbReference type="Reactome" id="R-SSC-4085377">
    <property type="pathway name" value="SUMOylation of SUMOylation proteins"/>
</dbReference>
<dbReference type="Reactome" id="R-SSC-4090294">
    <property type="pathway name" value="SUMOylation of intracellular receptors"/>
</dbReference>
<dbReference type="Reactome" id="R-SSC-4551638">
    <property type="pathway name" value="SUMOylation of chromatin organization proteins"/>
</dbReference>
<dbReference type="Reactome" id="R-SSC-4570464">
    <property type="pathway name" value="SUMOylation of RNA binding proteins"/>
</dbReference>
<dbReference type="Reactome" id="R-SSC-4615885">
    <property type="pathway name" value="SUMOylation of DNA replication proteins"/>
</dbReference>
<dbReference type="Reactome" id="R-SSC-5693607">
    <property type="pathway name" value="Processing of DNA double-strand break ends"/>
</dbReference>
<dbReference type="Reactome" id="R-SSC-5696395">
    <property type="pathway name" value="Formation of Incision Complex in GG-NER"/>
</dbReference>
<dbReference type="Proteomes" id="UP000008227">
    <property type="component" value="Chromosome 12"/>
</dbReference>
<dbReference type="Proteomes" id="UP000314985">
    <property type="component" value="Unplaced"/>
</dbReference>
<dbReference type="Proteomes" id="UP000694570">
    <property type="component" value="Unplaced"/>
</dbReference>
<dbReference type="Proteomes" id="UP000694571">
    <property type="component" value="Unplaced"/>
</dbReference>
<dbReference type="Proteomes" id="UP000694720">
    <property type="component" value="Unplaced"/>
</dbReference>
<dbReference type="Proteomes" id="UP000694722">
    <property type="component" value="Unplaced"/>
</dbReference>
<dbReference type="Proteomes" id="UP000694723">
    <property type="component" value="Unplaced"/>
</dbReference>
<dbReference type="Proteomes" id="UP000694724">
    <property type="component" value="Unplaced"/>
</dbReference>
<dbReference type="Proteomes" id="UP000694725">
    <property type="component" value="Unplaced"/>
</dbReference>
<dbReference type="Proteomes" id="UP000694726">
    <property type="component" value="Unplaced"/>
</dbReference>
<dbReference type="Proteomes" id="UP000694727">
    <property type="component" value="Unplaced"/>
</dbReference>
<dbReference type="Proteomes" id="UP000694728">
    <property type="component" value="Unplaced"/>
</dbReference>
<dbReference type="Bgee" id="ENSSSCG00000017212">
    <property type="expression patterns" value="Expressed in hindlimb bud and 43 other cell types or tissues"/>
</dbReference>
<dbReference type="ExpressionAtlas" id="P61958">
    <property type="expression patterns" value="baseline and differential"/>
</dbReference>
<dbReference type="GO" id="GO:0098982">
    <property type="term" value="C:GABA-ergic synapse"/>
    <property type="evidence" value="ECO:0007669"/>
    <property type="project" value="Ensembl"/>
</dbReference>
<dbReference type="GO" id="GO:0098978">
    <property type="term" value="C:glutamatergic synapse"/>
    <property type="evidence" value="ECO:0007669"/>
    <property type="project" value="Ensembl"/>
</dbReference>
<dbReference type="GO" id="GO:0098686">
    <property type="term" value="C:hippocampal mossy fiber to CA3 synapse"/>
    <property type="evidence" value="ECO:0007669"/>
    <property type="project" value="Ensembl"/>
</dbReference>
<dbReference type="GO" id="GO:0005634">
    <property type="term" value="C:nucleus"/>
    <property type="evidence" value="ECO:0000318"/>
    <property type="project" value="GO_Central"/>
</dbReference>
<dbReference type="GO" id="GO:0016605">
    <property type="term" value="C:PML body"/>
    <property type="evidence" value="ECO:0000250"/>
    <property type="project" value="UniProtKB"/>
</dbReference>
<dbReference type="GO" id="GO:0099524">
    <property type="term" value="C:postsynaptic cytosol"/>
    <property type="evidence" value="ECO:0007669"/>
    <property type="project" value="Ensembl"/>
</dbReference>
<dbReference type="GO" id="GO:0099523">
    <property type="term" value="C:presynaptic cytosol"/>
    <property type="evidence" value="ECO:0007669"/>
    <property type="project" value="Ensembl"/>
</dbReference>
<dbReference type="GO" id="GO:0031386">
    <property type="term" value="F:protein tag activity"/>
    <property type="evidence" value="ECO:0000318"/>
    <property type="project" value="GO_Central"/>
</dbReference>
<dbReference type="GO" id="GO:0019789">
    <property type="term" value="F:SUMO transferase activity"/>
    <property type="evidence" value="ECO:0007669"/>
    <property type="project" value="Ensembl"/>
</dbReference>
<dbReference type="GO" id="GO:0031625">
    <property type="term" value="F:ubiquitin protein ligase binding"/>
    <property type="evidence" value="ECO:0000250"/>
    <property type="project" value="UniProtKB"/>
</dbReference>
<dbReference type="GO" id="GO:0044389">
    <property type="term" value="F:ubiquitin-like protein ligase binding"/>
    <property type="evidence" value="ECO:0000318"/>
    <property type="project" value="GO_Central"/>
</dbReference>
<dbReference type="GO" id="GO:0032436">
    <property type="term" value="P:positive regulation of proteasomal ubiquitin-dependent protein catabolic process"/>
    <property type="evidence" value="ECO:0007669"/>
    <property type="project" value="Ensembl"/>
</dbReference>
<dbReference type="GO" id="GO:0045944">
    <property type="term" value="P:positive regulation of transcription by RNA polymerase II"/>
    <property type="evidence" value="ECO:0007669"/>
    <property type="project" value="Ensembl"/>
</dbReference>
<dbReference type="GO" id="GO:0016925">
    <property type="term" value="P:protein sumoylation"/>
    <property type="evidence" value="ECO:0000250"/>
    <property type="project" value="UniProtKB"/>
</dbReference>
<dbReference type="CDD" id="cd16115">
    <property type="entry name" value="Ubl_SUMO2_3_4"/>
    <property type="match status" value="1"/>
</dbReference>
<dbReference type="FunFam" id="3.10.20.90:FF:000482">
    <property type="entry name" value="Small ubiquitin-related modifier 2"/>
    <property type="match status" value="1"/>
</dbReference>
<dbReference type="Gene3D" id="3.10.20.90">
    <property type="entry name" value="Phosphatidylinositol 3-kinase Catalytic Subunit, Chain A, domain 1"/>
    <property type="match status" value="1"/>
</dbReference>
<dbReference type="InterPro" id="IPR022617">
    <property type="entry name" value="Rad60/SUMO-like_dom"/>
</dbReference>
<dbReference type="InterPro" id="IPR000626">
    <property type="entry name" value="Ubiquitin-like_dom"/>
</dbReference>
<dbReference type="InterPro" id="IPR029071">
    <property type="entry name" value="Ubiquitin-like_domsf"/>
</dbReference>
<dbReference type="PANTHER" id="PTHR10562">
    <property type="entry name" value="SMALL UBIQUITIN-RELATED MODIFIER"/>
    <property type="match status" value="1"/>
</dbReference>
<dbReference type="Pfam" id="PF11976">
    <property type="entry name" value="Rad60-SLD"/>
    <property type="match status" value="1"/>
</dbReference>
<dbReference type="SMART" id="SM00213">
    <property type="entry name" value="UBQ"/>
    <property type="match status" value="1"/>
</dbReference>
<dbReference type="SUPFAM" id="SSF54236">
    <property type="entry name" value="Ubiquitin-like"/>
    <property type="match status" value="1"/>
</dbReference>
<dbReference type="PROSITE" id="PS50053">
    <property type="entry name" value="UBIQUITIN_2"/>
    <property type="match status" value="1"/>
</dbReference>